<dbReference type="EC" id="4.98.1.1" evidence="5"/>
<dbReference type="EMBL" id="M61215">
    <property type="protein sequence ID" value="AAA80530.1"/>
    <property type="molecule type" value="mRNA"/>
</dbReference>
<dbReference type="EMBL" id="AK004718">
    <property type="protein sequence ID" value="BAB23501.1"/>
    <property type="molecule type" value="mRNA"/>
</dbReference>
<dbReference type="EMBL" id="AK018738">
    <property type="protein sequence ID" value="BAB31379.1"/>
    <property type="molecule type" value="mRNA"/>
</dbReference>
<dbReference type="EMBL" id="AK159652">
    <property type="protein sequence ID" value="BAE35263.1"/>
    <property type="molecule type" value="mRNA"/>
</dbReference>
<dbReference type="EMBL" id="M59288">
    <property type="protein sequence ID" value="AAA37615.1"/>
    <property type="status" value="ALT_INIT"/>
    <property type="molecule type" value="mRNA"/>
</dbReference>
<dbReference type="CCDS" id="CCDS29303.1"/>
<dbReference type="PIR" id="A37972">
    <property type="entry name" value="A37972"/>
</dbReference>
<dbReference type="RefSeq" id="NP_001334984.1">
    <property type="nucleotide sequence ID" value="NM_001348055.1"/>
</dbReference>
<dbReference type="RefSeq" id="NP_032024.2">
    <property type="nucleotide sequence ID" value="NM_007998.7"/>
</dbReference>
<dbReference type="SMR" id="P22315"/>
<dbReference type="FunCoup" id="P22315">
    <property type="interactions" value="2086"/>
</dbReference>
<dbReference type="IntAct" id="P22315">
    <property type="interactions" value="8"/>
</dbReference>
<dbReference type="MINT" id="P22315"/>
<dbReference type="STRING" id="10090.ENSMUSP00000157791"/>
<dbReference type="iPTMnet" id="P22315"/>
<dbReference type="PhosphoSitePlus" id="P22315"/>
<dbReference type="SwissPalm" id="P22315"/>
<dbReference type="jPOST" id="P22315"/>
<dbReference type="PaxDb" id="10090-ENSMUSP00000025484"/>
<dbReference type="PeptideAtlas" id="P22315"/>
<dbReference type="ProteomicsDB" id="269655"/>
<dbReference type="ProteomicsDB" id="339174"/>
<dbReference type="Pumba" id="P22315"/>
<dbReference type="Antibodypedia" id="9673">
    <property type="antibodies" value="200 antibodies from 30 providers"/>
</dbReference>
<dbReference type="DNASU" id="14151"/>
<dbReference type="Ensembl" id="ENSMUST00000236586.3">
    <property type="protein sequence ID" value="ENSMUSP00000157791.2"/>
    <property type="gene ID" value="ENSMUSG00000024588.11"/>
</dbReference>
<dbReference type="GeneID" id="14151"/>
<dbReference type="KEGG" id="mmu:14151"/>
<dbReference type="UCSC" id="uc008feh.1">
    <property type="organism name" value="mouse"/>
</dbReference>
<dbReference type="AGR" id="MGI:95513"/>
<dbReference type="CTD" id="2235"/>
<dbReference type="MGI" id="MGI:95513">
    <property type="gene designation" value="Fech"/>
</dbReference>
<dbReference type="VEuPathDB" id="HostDB:ENSMUSG00000024588"/>
<dbReference type="eggNOG" id="KOG1321">
    <property type="taxonomic scope" value="Eukaryota"/>
</dbReference>
<dbReference type="GeneTree" id="ENSGT00390000016258"/>
<dbReference type="HOGENOM" id="CLU_018884_1_0_1"/>
<dbReference type="InParanoid" id="P22315"/>
<dbReference type="OMA" id="DPYHCEC"/>
<dbReference type="OrthoDB" id="1323at2759"/>
<dbReference type="PhylomeDB" id="P22315"/>
<dbReference type="TreeFam" id="TF300859"/>
<dbReference type="BRENDA" id="4.99.1.1">
    <property type="organism ID" value="3474"/>
</dbReference>
<dbReference type="Reactome" id="R-MMU-189451">
    <property type="pathway name" value="Heme biosynthesis"/>
</dbReference>
<dbReference type="Reactome" id="R-MMU-9837999">
    <property type="pathway name" value="Mitochondrial protein degradation"/>
</dbReference>
<dbReference type="UniPathway" id="UPA00252">
    <property type="reaction ID" value="UER00325"/>
</dbReference>
<dbReference type="BioGRID-ORCS" id="14151">
    <property type="hits" value="17 hits in 80 CRISPR screens"/>
</dbReference>
<dbReference type="CD-CODE" id="CE726F99">
    <property type="entry name" value="Postsynaptic density"/>
</dbReference>
<dbReference type="ChiTaRS" id="Fech">
    <property type="organism name" value="mouse"/>
</dbReference>
<dbReference type="PRO" id="PR:P22315"/>
<dbReference type="Proteomes" id="UP000000589">
    <property type="component" value="Chromosome 18"/>
</dbReference>
<dbReference type="RNAct" id="P22315">
    <property type="molecule type" value="protein"/>
</dbReference>
<dbReference type="Bgee" id="ENSMUSG00000024588">
    <property type="expression patterns" value="Expressed in blood and 259 other cell types or tissues"/>
</dbReference>
<dbReference type="GO" id="GO:0005743">
    <property type="term" value="C:mitochondrial inner membrane"/>
    <property type="evidence" value="ECO:0000314"/>
    <property type="project" value="UniProtKB"/>
</dbReference>
<dbReference type="GO" id="GO:0005759">
    <property type="term" value="C:mitochondrial matrix"/>
    <property type="evidence" value="ECO:0000314"/>
    <property type="project" value="MGI"/>
</dbReference>
<dbReference type="GO" id="GO:0005739">
    <property type="term" value="C:mitochondrion"/>
    <property type="evidence" value="ECO:0007005"/>
    <property type="project" value="MGI"/>
</dbReference>
<dbReference type="GO" id="GO:0051537">
    <property type="term" value="F:2 iron, 2 sulfur cluster binding"/>
    <property type="evidence" value="ECO:0007669"/>
    <property type="project" value="UniProtKB-KW"/>
</dbReference>
<dbReference type="GO" id="GO:0004325">
    <property type="term" value="F:ferrochelatase activity"/>
    <property type="evidence" value="ECO:0000314"/>
    <property type="project" value="MGI"/>
</dbReference>
<dbReference type="GO" id="GO:0020037">
    <property type="term" value="F:heme binding"/>
    <property type="evidence" value="ECO:0000314"/>
    <property type="project" value="MGI"/>
</dbReference>
<dbReference type="GO" id="GO:0005506">
    <property type="term" value="F:iron ion binding"/>
    <property type="evidence" value="ECO:0000314"/>
    <property type="project" value="MGI"/>
</dbReference>
<dbReference type="GO" id="GO:0030350">
    <property type="term" value="F:iron-responsive element binding"/>
    <property type="evidence" value="ECO:0000314"/>
    <property type="project" value="MGI"/>
</dbReference>
<dbReference type="GO" id="GO:0042803">
    <property type="term" value="F:protein homodimerization activity"/>
    <property type="evidence" value="ECO:0007669"/>
    <property type="project" value="Ensembl"/>
</dbReference>
<dbReference type="GO" id="GO:0046906">
    <property type="term" value="F:tetrapyrrole binding"/>
    <property type="evidence" value="ECO:0000314"/>
    <property type="project" value="MGI"/>
</dbReference>
<dbReference type="GO" id="GO:0071549">
    <property type="term" value="P:cellular response to dexamethasone stimulus"/>
    <property type="evidence" value="ECO:0007669"/>
    <property type="project" value="Ensembl"/>
</dbReference>
<dbReference type="GO" id="GO:0008203">
    <property type="term" value="P:cholesterol metabolic process"/>
    <property type="evidence" value="ECO:0000315"/>
    <property type="project" value="MGI"/>
</dbReference>
<dbReference type="GO" id="GO:0009589">
    <property type="term" value="P:detection of UV"/>
    <property type="evidence" value="ECO:0000315"/>
    <property type="project" value="MGI"/>
</dbReference>
<dbReference type="GO" id="GO:0030218">
    <property type="term" value="P:erythrocyte differentiation"/>
    <property type="evidence" value="ECO:0000315"/>
    <property type="project" value="MGI"/>
</dbReference>
<dbReference type="GO" id="GO:0006784">
    <property type="term" value="P:heme A biosynthetic process"/>
    <property type="evidence" value="ECO:0000315"/>
    <property type="project" value="MGI"/>
</dbReference>
<dbReference type="GO" id="GO:0006785">
    <property type="term" value="P:heme B biosynthetic process"/>
    <property type="evidence" value="ECO:0000315"/>
    <property type="project" value="MGI"/>
</dbReference>
<dbReference type="GO" id="GO:0006783">
    <property type="term" value="P:heme biosynthetic process"/>
    <property type="evidence" value="ECO:0000314"/>
    <property type="project" value="MGI"/>
</dbReference>
<dbReference type="GO" id="GO:0048034">
    <property type="term" value="P:heme O biosynthetic process"/>
    <property type="evidence" value="ECO:0000315"/>
    <property type="project" value="MGI"/>
</dbReference>
<dbReference type="GO" id="GO:0060586">
    <property type="term" value="P:multicellular organismal-level iron ion homeostasis"/>
    <property type="evidence" value="ECO:0000315"/>
    <property type="project" value="MGI"/>
</dbReference>
<dbReference type="GO" id="GO:0006779">
    <property type="term" value="P:porphyrin-containing compound biosynthetic process"/>
    <property type="evidence" value="ECO:0000315"/>
    <property type="project" value="MGI"/>
</dbReference>
<dbReference type="GO" id="GO:0046501">
    <property type="term" value="P:protoporphyrinogen IX metabolic process"/>
    <property type="evidence" value="ECO:0000316"/>
    <property type="project" value="MGI"/>
</dbReference>
<dbReference type="GO" id="GO:0046984">
    <property type="term" value="P:regulation of hemoglobin biosynthetic process"/>
    <property type="evidence" value="ECO:0000316"/>
    <property type="project" value="MGI"/>
</dbReference>
<dbReference type="GO" id="GO:0046685">
    <property type="term" value="P:response to arsenic-containing substance"/>
    <property type="evidence" value="ECO:0007669"/>
    <property type="project" value="Ensembl"/>
</dbReference>
<dbReference type="GO" id="GO:0045471">
    <property type="term" value="P:response to ethanol"/>
    <property type="evidence" value="ECO:0007669"/>
    <property type="project" value="Ensembl"/>
</dbReference>
<dbReference type="GO" id="GO:0017085">
    <property type="term" value="P:response to insecticide"/>
    <property type="evidence" value="ECO:0007669"/>
    <property type="project" value="Ensembl"/>
</dbReference>
<dbReference type="GO" id="GO:0010288">
    <property type="term" value="P:response to lead ion"/>
    <property type="evidence" value="ECO:0007669"/>
    <property type="project" value="Ensembl"/>
</dbReference>
<dbReference type="GO" id="GO:0009416">
    <property type="term" value="P:response to light stimulus"/>
    <property type="evidence" value="ECO:0000315"/>
    <property type="project" value="MGI"/>
</dbReference>
<dbReference type="GO" id="GO:0051597">
    <property type="term" value="P:response to methylmercury"/>
    <property type="evidence" value="ECO:0007669"/>
    <property type="project" value="Ensembl"/>
</dbReference>
<dbReference type="GO" id="GO:0070541">
    <property type="term" value="P:response to platinum ion"/>
    <property type="evidence" value="ECO:0007669"/>
    <property type="project" value="Ensembl"/>
</dbReference>
<dbReference type="GO" id="GO:0009410">
    <property type="term" value="P:response to xenobiotic stimulus"/>
    <property type="evidence" value="ECO:0007669"/>
    <property type="project" value="Ensembl"/>
</dbReference>
<dbReference type="GO" id="GO:0034379">
    <property type="term" value="P:very-low-density lipoprotein particle assembly"/>
    <property type="evidence" value="ECO:0000315"/>
    <property type="project" value="MGI"/>
</dbReference>
<dbReference type="CDD" id="cd00419">
    <property type="entry name" value="Ferrochelatase_C"/>
    <property type="match status" value="1"/>
</dbReference>
<dbReference type="CDD" id="cd03411">
    <property type="entry name" value="Ferrochelatase_N"/>
    <property type="match status" value="1"/>
</dbReference>
<dbReference type="FunFam" id="3.40.50.1400:FF:000003">
    <property type="entry name" value="Ferrochelatase"/>
    <property type="match status" value="1"/>
</dbReference>
<dbReference type="Gene3D" id="3.40.50.1400">
    <property type="match status" value="2"/>
</dbReference>
<dbReference type="HAMAP" id="MF_00323">
    <property type="entry name" value="Ferrochelatase"/>
    <property type="match status" value="1"/>
</dbReference>
<dbReference type="InterPro" id="IPR001015">
    <property type="entry name" value="Ferrochelatase"/>
</dbReference>
<dbReference type="InterPro" id="IPR019772">
    <property type="entry name" value="Ferrochelatase_AS"/>
</dbReference>
<dbReference type="InterPro" id="IPR033644">
    <property type="entry name" value="Ferrochelatase_C"/>
</dbReference>
<dbReference type="InterPro" id="IPR033659">
    <property type="entry name" value="Ferrochelatase_N"/>
</dbReference>
<dbReference type="NCBIfam" id="TIGR00109">
    <property type="entry name" value="hemH"/>
    <property type="match status" value="1"/>
</dbReference>
<dbReference type="PANTHER" id="PTHR11108">
    <property type="entry name" value="FERROCHELATASE"/>
    <property type="match status" value="1"/>
</dbReference>
<dbReference type="PANTHER" id="PTHR11108:SF1">
    <property type="entry name" value="FERROCHELATASE, MITOCHONDRIAL"/>
    <property type="match status" value="1"/>
</dbReference>
<dbReference type="Pfam" id="PF00762">
    <property type="entry name" value="Ferrochelatase"/>
    <property type="match status" value="1"/>
</dbReference>
<dbReference type="SUPFAM" id="SSF53800">
    <property type="entry name" value="Chelatase"/>
    <property type="match status" value="1"/>
</dbReference>
<dbReference type="PROSITE" id="PS00534">
    <property type="entry name" value="FERROCHELATASE"/>
    <property type="match status" value="1"/>
</dbReference>
<evidence type="ECO:0000250" key="1">
    <source>
        <dbReference type="UniProtKB" id="P22830"/>
    </source>
</evidence>
<evidence type="ECO:0000269" key="2">
    <source>
    </source>
</evidence>
<evidence type="ECO:0000269" key="3">
    <source>
    </source>
</evidence>
<evidence type="ECO:0000269" key="4">
    <source>
    </source>
</evidence>
<evidence type="ECO:0000269" key="5">
    <source>
    </source>
</evidence>
<evidence type="ECO:0000269" key="6">
    <source>
    </source>
</evidence>
<evidence type="ECO:0000269" key="7">
    <source>
    </source>
</evidence>
<evidence type="ECO:0000305" key="8"/>
<evidence type="ECO:0000312" key="9">
    <source>
        <dbReference type="MGI" id="MGI:95513"/>
    </source>
</evidence>
<evidence type="ECO:0007744" key="10">
    <source>
    </source>
</evidence>
<evidence type="ECO:0007744" key="11">
    <source>
    </source>
</evidence>
<protein>
    <recommendedName>
        <fullName evidence="8">Ferrochelatase, mitochondrial</fullName>
        <ecNumber evidence="5">4.98.1.1</ecNumber>
    </recommendedName>
    <alternativeName>
        <fullName>Heme synthase</fullName>
    </alternativeName>
    <alternativeName>
        <fullName>Protoheme ferro-lyase</fullName>
    </alternativeName>
</protein>
<proteinExistence type="evidence at protein level"/>
<sequence length="422" mass="47422">MLSASANMAAALRAAGALLREPLVHGSSRACQPWRCQSGAAVAATTEKVHHAKTTKPQAQPERRKPKTGILMLNMGGPETLGEVQDFLQRLFLDRDLMTLPIQNKLAPFIAKRRTPKIQEQYRRIGGGSPIKMWTSKQGEGMVKLLDELSPATAPHKYYIGFRYVHPLTEEAIEEMERDGLERAIAFTQYPQYSCSTTGSSLNAIYRYYNEVGQKPTMKWSTIDRWPTHPLLIQCFADHILKELNHFPEEKRSEVVILFSAHSLPMSVVNRGDPYPQEVGATVHKVMEKLGYPNPYRLVWQSKVGPVPWLGPQTDEAIKGLCERGRKNILLVPIAFTSDHIETLYELDIEYSQVLAQKCGAENIRRAESLNGNPLFSKALADLVHSHIQSNKLCSTQLSLNCPLCVNPVCRKTKSFFTSQQL</sequence>
<name>HEMH_MOUSE</name>
<accession>P22315</accession>
<accession>Q544X6</accession>
<keyword id="KW-0001">2Fe-2S</keyword>
<keyword id="KW-0007">Acetylation</keyword>
<keyword id="KW-0903">Direct protein sequencing</keyword>
<keyword id="KW-0225">Disease variant</keyword>
<keyword id="KW-0350">Heme biosynthesis</keyword>
<keyword id="KW-0408">Iron</keyword>
<keyword id="KW-0411">Iron-sulfur</keyword>
<keyword id="KW-0456">Lyase</keyword>
<keyword id="KW-0472">Membrane</keyword>
<keyword id="KW-0479">Metal-binding</keyword>
<keyword id="KW-0496">Mitochondrion</keyword>
<keyword id="KW-0999">Mitochondrion inner membrane</keyword>
<keyword id="KW-0627">Porphyrin biosynthesis</keyword>
<keyword id="KW-1185">Reference proteome</keyword>
<keyword id="KW-0809">Transit peptide</keyword>
<feature type="transit peptide" description="Mitochondrion" evidence="4">
    <location>
        <begin position="1"/>
        <end position="53"/>
    </location>
</feature>
<feature type="chain" id="PRO_0000008874" description="Ferrochelatase, mitochondrial">
    <location>
        <begin position="54"/>
        <end position="422"/>
    </location>
</feature>
<feature type="active site" evidence="1">
    <location>
        <position position="229"/>
    </location>
</feature>
<feature type="active site" evidence="1">
    <location>
        <position position="382"/>
    </location>
</feature>
<feature type="binding site" evidence="1">
    <location>
        <position position="114"/>
    </location>
    <ligand>
        <name>protoporphyrin IX</name>
        <dbReference type="ChEBI" id="CHEBI:57306"/>
    </ligand>
</feature>
<feature type="binding site" evidence="1">
    <location>
        <position position="122"/>
    </location>
    <ligand>
        <name>protoporphyrin IX</name>
        <dbReference type="ChEBI" id="CHEBI:57306"/>
    </ligand>
</feature>
<feature type="binding site" evidence="1">
    <location>
        <position position="129"/>
    </location>
    <ligand>
        <name>protoporphyrin IX</name>
        <dbReference type="ChEBI" id="CHEBI:57306"/>
    </ligand>
</feature>
<feature type="binding site" evidence="1">
    <location>
        <position position="195"/>
    </location>
    <ligand>
        <name>[2Fe-2S] cluster</name>
        <dbReference type="ChEBI" id="CHEBI:190135"/>
    </ligand>
</feature>
<feature type="binding site" evidence="1">
    <location>
        <position position="402"/>
    </location>
    <ligand>
        <name>[2Fe-2S] cluster</name>
        <dbReference type="ChEBI" id="CHEBI:190135"/>
    </ligand>
</feature>
<feature type="binding site" evidence="1">
    <location>
        <position position="405"/>
    </location>
    <ligand>
        <name>[2Fe-2S] cluster</name>
        <dbReference type="ChEBI" id="CHEBI:190135"/>
    </ligand>
</feature>
<feature type="binding site" evidence="1">
    <location>
        <position position="410"/>
    </location>
    <ligand>
        <name>[2Fe-2S] cluster</name>
        <dbReference type="ChEBI" id="CHEBI:190135"/>
    </ligand>
</feature>
<feature type="modified residue" description="N6-acetyllysine" evidence="10">
    <location>
        <position position="56"/>
    </location>
</feature>
<feature type="modified residue" description="N6-succinyllysine" evidence="11">
    <location>
        <position position="137"/>
    </location>
</feature>
<feature type="modified residue" description="N6-acetyllysine; alternate" evidence="10">
    <location>
        <position position="289"/>
    </location>
</feature>
<feature type="modified residue" description="N6-succinyllysine; alternate" evidence="11">
    <location>
        <position position="289"/>
    </location>
</feature>
<feature type="modified residue" description="N6-acetyllysine; alternate" evidence="10">
    <location>
        <position position="414"/>
    </location>
</feature>
<feature type="modified residue" description="N6-succinyllysine; alternate" evidence="11">
    <location>
        <position position="414"/>
    </location>
</feature>
<feature type="sequence variant" description="In Fechm1Pas." evidence="7">
    <original>M</original>
    <variation>K</variation>
    <location>
        <position position="98"/>
    </location>
</feature>
<feature type="sequence conflict" description="In Ref. 1; AAA80530." evidence="8" ref="1">
    <location>
        <begin position="121"/>
        <end position="122"/>
    </location>
</feature>
<organism>
    <name type="scientific">Mus musculus</name>
    <name type="common">Mouse</name>
    <dbReference type="NCBI Taxonomy" id="10090"/>
    <lineage>
        <taxon>Eukaryota</taxon>
        <taxon>Metazoa</taxon>
        <taxon>Chordata</taxon>
        <taxon>Craniata</taxon>
        <taxon>Vertebrata</taxon>
        <taxon>Euteleostomi</taxon>
        <taxon>Mammalia</taxon>
        <taxon>Eutheria</taxon>
        <taxon>Euarchontoglires</taxon>
        <taxon>Glires</taxon>
        <taxon>Rodentia</taxon>
        <taxon>Myomorpha</taxon>
        <taxon>Muroidea</taxon>
        <taxon>Muridae</taxon>
        <taxon>Murinae</taxon>
        <taxon>Mus</taxon>
        <taxon>Mus</taxon>
    </lineage>
</organism>
<reference key="1">
    <citation type="journal article" date="1990" name="J. Biol. Chem.">
        <title>Molecular cloning, sequencing, and expression of mouse ferrochelatase.</title>
        <authorList>
            <person name="Taketani S."/>
            <person name="Nakahashi Y."/>
            <person name="Osumi T."/>
            <person name="Tokunaga R."/>
        </authorList>
    </citation>
    <scope>NUCLEOTIDE SEQUENCE [MRNA]</scope>
    <scope>PROTEIN SEQUENCE OF 54-63</scope>
    <scope>INDUCTION</scope>
</reference>
<reference key="2">
    <citation type="journal article" date="2005" name="Science">
        <title>The transcriptional landscape of the mammalian genome.</title>
        <authorList>
            <person name="Carninci P."/>
            <person name="Kasukawa T."/>
            <person name="Katayama S."/>
            <person name="Gough J."/>
            <person name="Frith M.C."/>
            <person name="Maeda N."/>
            <person name="Oyama R."/>
            <person name="Ravasi T."/>
            <person name="Lenhard B."/>
            <person name="Wells C."/>
            <person name="Kodzius R."/>
            <person name="Shimokawa K."/>
            <person name="Bajic V.B."/>
            <person name="Brenner S.E."/>
            <person name="Batalov S."/>
            <person name="Forrest A.R."/>
            <person name="Zavolan M."/>
            <person name="Davis M.J."/>
            <person name="Wilming L.G."/>
            <person name="Aidinis V."/>
            <person name="Allen J.E."/>
            <person name="Ambesi-Impiombato A."/>
            <person name="Apweiler R."/>
            <person name="Aturaliya R.N."/>
            <person name="Bailey T.L."/>
            <person name="Bansal M."/>
            <person name="Baxter L."/>
            <person name="Beisel K.W."/>
            <person name="Bersano T."/>
            <person name="Bono H."/>
            <person name="Chalk A.M."/>
            <person name="Chiu K.P."/>
            <person name="Choudhary V."/>
            <person name="Christoffels A."/>
            <person name="Clutterbuck D.R."/>
            <person name="Crowe M.L."/>
            <person name="Dalla E."/>
            <person name="Dalrymple B.P."/>
            <person name="de Bono B."/>
            <person name="Della Gatta G."/>
            <person name="di Bernardo D."/>
            <person name="Down T."/>
            <person name="Engstrom P."/>
            <person name="Fagiolini M."/>
            <person name="Faulkner G."/>
            <person name="Fletcher C.F."/>
            <person name="Fukushima T."/>
            <person name="Furuno M."/>
            <person name="Futaki S."/>
            <person name="Gariboldi M."/>
            <person name="Georgii-Hemming P."/>
            <person name="Gingeras T.R."/>
            <person name="Gojobori T."/>
            <person name="Green R.E."/>
            <person name="Gustincich S."/>
            <person name="Harbers M."/>
            <person name="Hayashi Y."/>
            <person name="Hensch T.K."/>
            <person name="Hirokawa N."/>
            <person name="Hill D."/>
            <person name="Huminiecki L."/>
            <person name="Iacono M."/>
            <person name="Ikeo K."/>
            <person name="Iwama A."/>
            <person name="Ishikawa T."/>
            <person name="Jakt M."/>
            <person name="Kanapin A."/>
            <person name="Katoh M."/>
            <person name="Kawasawa Y."/>
            <person name="Kelso J."/>
            <person name="Kitamura H."/>
            <person name="Kitano H."/>
            <person name="Kollias G."/>
            <person name="Krishnan S.P."/>
            <person name="Kruger A."/>
            <person name="Kummerfeld S.K."/>
            <person name="Kurochkin I.V."/>
            <person name="Lareau L.F."/>
            <person name="Lazarevic D."/>
            <person name="Lipovich L."/>
            <person name="Liu J."/>
            <person name="Liuni S."/>
            <person name="McWilliam S."/>
            <person name="Madan Babu M."/>
            <person name="Madera M."/>
            <person name="Marchionni L."/>
            <person name="Matsuda H."/>
            <person name="Matsuzawa S."/>
            <person name="Miki H."/>
            <person name="Mignone F."/>
            <person name="Miyake S."/>
            <person name="Morris K."/>
            <person name="Mottagui-Tabar S."/>
            <person name="Mulder N."/>
            <person name="Nakano N."/>
            <person name="Nakauchi H."/>
            <person name="Ng P."/>
            <person name="Nilsson R."/>
            <person name="Nishiguchi S."/>
            <person name="Nishikawa S."/>
            <person name="Nori F."/>
            <person name="Ohara O."/>
            <person name="Okazaki Y."/>
            <person name="Orlando V."/>
            <person name="Pang K.C."/>
            <person name="Pavan W.J."/>
            <person name="Pavesi G."/>
            <person name="Pesole G."/>
            <person name="Petrovsky N."/>
            <person name="Piazza S."/>
            <person name="Reed J."/>
            <person name="Reid J.F."/>
            <person name="Ring B.Z."/>
            <person name="Ringwald M."/>
            <person name="Rost B."/>
            <person name="Ruan Y."/>
            <person name="Salzberg S.L."/>
            <person name="Sandelin A."/>
            <person name="Schneider C."/>
            <person name="Schoenbach C."/>
            <person name="Sekiguchi K."/>
            <person name="Semple C.A."/>
            <person name="Seno S."/>
            <person name="Sessa L."/>
            <person name="Sheng Y."/>
            <person name="Shibata Y."/>
            <person name="Shimada H."/>
            <person name="Shimada K."/>
            <person name="Silva D."/>
            <person name="Sinclair B."/>
            <person name="Sperling S."/>
            <person name="Stupka E."/>
            <person name="Sugiura K."/>
            <person name="Sultana R."/>
            <person name="Takenaka Y."/>
            <person name="Taki K."/>
            <person name="Tammoja K."/>
            <person name="Tan S.L."/>
            <person name="Tang S."/>
            <person name="Taylor M.S."/>
            <person name="Tegner J."/>
            <person name="Teichmann S.A."/>
            <person name="Ueda H.R."/>
            <person name="van Nimwegen E."/>
            <person name="Verardo R."/>
            <person name="Wei C.L."/>
            <person name="Yagi K."/>
            <person name="Yamanishi H."/>
            <person name="Zabarovsky E."/>
            <person name="Zhu S."/>
            <person name="Zimmer A."/>
            <person name="Hide W."/>
            <person name="Bult C."/>
            <person name="Grimmond S.M."/>
            <person name="Teasdale R.D."/>
            <person name="Liu E.T."/>
            <person name="Brusic V."/>
            <person name="Quackenbush J."/>
            <person name="Wahlestedt C."/>
            <person name="Mattick J.S."/>
            <person name="Hume D.A."/>
            <person name="Kai C."/>
            <person name="Sasaki D."/>
            <person name="Tomaru Y."/>
            <person name="Fukuda S."/>
            <person name="Kanamori-Katayama M."/>
            <person name="Suzuki M."/>
            <person name="Aoki J."/>
            <person name="Arakawa T."/>
            <person name="Iida J."/>
            <person name="Imamura K."/>
            <person name="Itoh M."/>
            <person name="Kato T."/>
            <person name="Kawaji H."/>
            <person name="Kawagashira N."/>
            <person name="Kawashima T."/>
            <person name="Kojima M."/>
            <person name="Kondo S."/>
            <person name="Konno H."/>
            <person name="Nakano K."/>
            <person name="Ninomiya N."/>
            <person name="Nishio T."/>
            <person name="Okada M."/>
            <person name="Plessy C."/>
            <person name="Shibata K."/>
            <person name="Shiraki T."/>
            <person name="Suzuki S."/>
            <person name="Tagami M."/>
            <person name="Waki K."/>
            <person name="Watahiki A."/>
            <person name="Okamura-Oho Y."/>
            <person name="Suzuki H."/>
            <person name="Kawai J."/>
            <person name="Hayashizaki Y."/>
        </authorList>
    </citation>
    <scope>NUCLEOTIDE SEQUENCE [LARGE SCALE MRNA]</scope>
    <source>
        <strain>C57BL/6J</strain>
        <tissue>Kidney</tissue>
        <tissue>Lung</tissue>
    </source>
</reference>
<reference key="3">
    <citation type="journal article" date="2009" name="PLoS Biol.">
        <title>Lineage-specific biology revealed by a finished genome assembly of the mouse.</title>
        <authorList>
            <person name="Church D.M."/>
            <person name="Goodstadt L."/>
            <person name="Hillier L.W."/>
            <person name="Zody M.C."/>
            <person name="Goldstein S."/>
            <person name="She X."/>
            <person name="Bult C.J."/>
            <person name="Agarwala R."/>
            <person name="Cherry J.L."/>
            <person name="DiCuccio M."/>
            <person name="Hlavina W."/>
            <person name="Kapustin Y."/>
            <person name="Meric P."/>
            <person name="Maglott D."/>
            <person name="Birtle Z."/>
            <person name="Marques A.C."/>
            <person name="Graves T."/>
            <person name="Zhou S."/>
            <person name="Teague B."/>
            <person name="Potamousis K."/>
            <person name="Churas C."/>
            <person name="Place M."/>
            <person name="Herschleb J."/>
            <person name="Runnheim R."/>
            <person name="Forrest D."/>
            <person name="Amos-Landgraf J."/>
            <person name="Schwartz D.C."/>
            <person name="Cheng Z."/>
            <person name="Lindblad-Toh K."/>
            <person name="Eichler E.E."/>
            <person name="Ponting C.P."/>
        </authorList>
    </citation>
    <scope>NUCLEOTIDE SEQUENCE [LARGE SCALE GENOMIC DNA]</scope>
    <scope>IDENTIFICATION</scope>
    <source>
        <strain>C57BL/6J</strain>
    </source>
</reference>
<reference key="4">
    <citation type="journal article" date="1991" name="Proc. Natl. Acad. Sci. U.S.A.">
        <title>Cloning of murine ferrochelatase.</title>
        <authorList>
            <person name="Brenner D.A."/>
            <person name="Frasier F."/>
        </authorList>
    </citation>
    <scope>NUCLEOTIDE SEQUENCE [MRNA] OF 26-422</scope>
    <scope>PROTEIN SEQUENCE OF 241-245 AND 332-337</scope>
    <scope>TISSUE SPECIFICITY</scope>
    <source>
        <strain>ICR</strain>
        <tissue>Liver</tissue>
    </source>
</reference>
<reference key="5">
    <citation type="journal article" date="1994" name="J. Biol. Chem.">
        <title>Mammalian ferrochelatase. Expression and characterization of normal and two human protoporphyric ferrochelatases.</title>
        <authorList>
            <person name="Dailey H.A."/>
            <person name="Sellers V.M."/>
            <person name="Dailey T.A."/>
        </authorList>
    </citation>
    <scope>CHARACTERIZATION</scope>
</reference>
<reference key="6">
    <citation type="journal article" date="2006" name="Mol. Cell. Proteomics">
        <title>Comprehensive identification of phosphorylation sites in postsynaptic density preparations.</title>
        <authorList>
            <person name="Trinidad J.C."/>
            <person name="Specht C.G."/>
            <person name="Thalhammer A."/>
            <person name="Schoepfer R."/>
            <person name="Burlingame A.L."/>
        </authorList>
    </citation>
    <scope>IDENTIFICATION BY MASS SPECTROMETRY [LARGE SCALE ANALYSIS]</scope>
    <source>
        <tissue>Brain</tissue>
    </source>
</reference>
<reference key="7">
    <citation type="journal article" date="2010" name="Blood">
        <title>Ferrochelatase forms an oligomeric complex with mitoferrin-1 and Abcb10 for erythroid heme biosynthesis.</title>
        <authorList>
            <person name="Chen W."/>
            <person name="Dailey H.A."/>
            <person name="Paw B.H."/>
        </authorList>
    </citation>
    <scope>INTERACTION WITH ABCB10 AND SLC25A37</scope>
</reference>
<reference key="8">
    <citation type="journal article" date="2010" name="Cell">
        <title>A tissue-specific atlas of mouse protein phosphorylation and expression.</title>
        <authorList>
            <person name="Huttlin E.L."/>
            <person name="Jedrychowski M.P."/>
            <person name="Elias J.E."/>
            <person name="Goswami T."/>
            <person name="Rad R."/>
            <person name="Beausoleil S.A."/>
            <person name="Villen J."/>
            <person name="Haas W."/>
            <person name="Sowa M.E."/>
            <person name="Gygi S.P."/>
        </authorList>
    </citation>
    <scope>IDENTIFICATION BY MASS SPECTROMETRY [LARGE SCALE ANALYSIS]</scope>
    <source>
        <tissue>Brain</tissue>
        <tissue>Brown adipose tissue</tissue>
        <tissue>Heart</tissue>
        <tissue>Kidney</tissue>
        <tissue>Liver</tissue>
        <tissue>Lung</tissue>
        <tissue>Pancreas</tissue>
        <tissue>Spleen</tissue>
        <tissue>Testis</tissue>
    </source>
</reference>
<reference key="9">
    <citation type="journal article" date="2013" name="Mol. Cell">
        <title>SIRT5-mediated lysine desuccinylation impacts diverse metabolic pathways.</title>
        <authorList>
            <person name="Park J."/>
            <person name="Chen Y."/>
            <person name="Tishkoff D.X."/>
            <person name="Peng C."/>
            <person name="Tan M."/>
            <person name="Dai L."/>
            <person name="Xie Z."/>
            <person name="Zhang Y."/>
            <person name="Zwaans B.M."/>
            <person name="Skinner M.E."/>
            <person name="Lombard D.B."/>
            <person name="Zhao Y."/>
        </authorList>
    </citation>
    <scope>SUCCINYLATION [LARGE SCALE ANALYSIS] AT LYS-137; LYS-289 AND LYS-414</scope>
    <scope>IDENTIFICATION BY MASS SPECTROMETRY [LARGE SCALE ANALYSIS]</scope>
    <source>
        <tissue>Embryonic fibroblast</tissue>
        <tissue>Liver</tissue>
    </source>
</reference>
<reference key="10">
    <citation type="journal article" date="2013" name="Proc. Natl. Acad. Sci. U.S.A.">
        <title>Label-free quantitative proteomics of the lysine acetylome in mitochondria identifies substrates of SIRT3 in metabolic pathways.</title>
        <authorList>
            <person name="Rardin M.J."/>
            <person name="Newman J.C."/>
            <person name="Held J.M."/>
            <person name="Cusack M.P."/>
            <person name="Sorensen D.J."/>
            <person name="Li B."/>
            <person name="Schilling B."/>
            <person name="Mooney S.D."/>
            <person name="Kahn C.R."/>
            <person name="Verdin E."/>
            <person name="Gibson B.W."/>
        </authorList>
    </citation>
    <scope>ACETYLATION [LARGE SCALE ANALYSIS] AT LYS-56; LYS-289 AND LYS-414</scope>
    <scope>IDENTIFICATION BY MASS SPECTROMETRY [LARGE SCALE ANALYSIS]</scope>
    <source>
        <tissue>Liver</tissue>
    </source>
</reference>
<reference key="11">
    <citation type="journal article" date="2016" name="Biochemistry">
        <title>A Novel Role for Progesterone Receptor Membrane Component 1 (PGRMC1): A Partner and Regulator of Ferrochelatase.</title>
        <authorList>
            <person name="Piel R.B. III"/>
            <person name="Shiferaw M.T."/>
            <person name="Vashisht A.A."/>
            <person name="Marcero J.R."/>
            <person name="Praissman J.L."/>
            <person name="Phillips J.D."/>
            <person name="Wohlschlegel J.A."/>
            <person name="Medlock A.E."/>
        </authorList>
    </citation>
    <scope>INTERACTION WITH PGRMC1</scope>
    <scope>SUBCELLULAR LOCATION</scope>
    <scope>FUNCTION</scope>
    <scope>CATALYTIC ACTIVITY</scope>
</reference>
<reference key="12">
    <citation type="journal article" date="2019" name="Haematologica">
        <title>Dimeric ferrochelatase bridges ABCB7 and ABCB10 homodimers in an architecturally defined molecular complex required for heme biosynthesis.</title>
        <authorList>
            <person name="Maio N."/>
            <person name="Kim K.S."/>
            <person name="Holmes-Hampton G."/>
            <person name="Singh A."/>
            <person name="Rouault T.A."/>
        </authorList>
    </citation>
    <scope>INTERACTION WITH ABCB7 AND ABCB10</scope>
    <scope>SUBUNIT</scope>
</reference>
<reference key="13">
    <citation type="journal article" date="1993" name="Genomics">
        <title>Ferrochelatase structural mutant (Fechm1Pas) in the house mouse.</title>
        <authorList>
            <person name="Boulechfar S."/>
            <person name="Lamoril J."/>
            <person name="Montagutelli X."/>
            <person name="Guenet J.-L."/>
            <person name="Deybach J.-C."/>
            <person name="Nordmann Y."/>
            <person name="Dailey H."/>
            <person name="Grandchamp B."/>
            <person name="de Verneuil H."/>
        </authorList>
    </citation>
    <scope>VARIANT FECHM1PAS LYS-98</scope>
    <source>
        <tissue>Liver</tissue>
    </source>
</reference>
<gene>
    <name evidence="9" type="primary">Fech</name>
</gene>
<comment type="function">
    <text evidence="5">Catalyzes the ferrous insertion into protoporphyrin IX.</text>
</comment>
<comment type="catalytic activity">
    <reaction evidence="5">
        <text>heme b + 2 H(+) = protoporphyrin IX + Fe(2+)</text>
        <dbReference type="Rhea" id="RHEA:22584"/>
        <dbReference type="ChEBI" id="CHEBI:15378"/>
        <dbReference type="ChEBI" id="CHEBI:29033"/>
        <dbReference type="ChEBI" id="CHEBI:57306"/>
        <dbReference type="ChEBI" id="CHEBI:60344"/>
        <dbReference type="EC" id="4.98.1.1"/>
    </reaction>
    <physiologicalReaction direction="right-to-left" evidence="5">
        <dbReference type="Rhea" id="RHEA:22586"/>
    </physiologicalReaction>
</comment>
<comment type="cofactor">
    <cofactor evidence="1">
        <name>[2Fe-2S] cluster</name>
        <dbReference type="ChEBI" id="CHEBI:190135"/>
    </cofactor>
    <text evidence="1">Binds 1 [2Fe-2S] cluster.</text>
</comment>
<comment type="pathway">
    <text evidence="1">Porphyrin-containing compound metabolism; protoheme biosynthesis; protoheme from protoporphyrin-IX: step 1/1.</text>
</comment>
<comment type="subunit">
    <text evidence="1 3 5 6">Homodimer. Homotetramer (By similarity). Interaction with PGRMC1; the interaction results in decreased FECH activity (PubMed:27599036). Interacts with ABCB10 and SLC25A37; this interaction forms an oligomeric complex (PubMed:20427704). Forms a complex with ABCB7 and ABCB10, where a dimeric FECH bridges ABCB7 and ABCB10 homodimers; this complex may be required for cellular iron homeostasis, mitochondrial function and heme biosynthesis (PubMed:30765471). Interacts with ABCB7 and ABCB10 (PubMed:30765471).</text>
</comment>
<comment type="interaction">
    <interactant intactId="EBI-7174007">
        <id>P22315</id>
    </interactant>
    <interactant intactId="EBI-1050125">
        <id>O15173</id>
        <label>PGRMC2</label>
    </interactant>
    <organismsDiffer>true</organismsDiffer>
    <experiments>2</experiments>
</comment>
<comment type="subcellular location">
    <subcellularLocation>
        <location evidence="5">Mitochondrion inner membrane</location>
        <topology evidence="5">Peripheral membrane protein</topology>
        <orientation evidence="5">Matrix side</orientation>
    </subcellularLocation>
</comment>
<comment type="tissue specificity">
    <text evidence="2">Erythroid and hepatic cells.</text>
</comment>
<comment type="induction">
    <text evidence="4">During erythroid differentiation.</text>
</comment>
<comment type="disease">
    <text evidence="7">Defects in Fech are the cause of a viable autosomal recessive mutation (named Fechm1Pas or Fch) that causes jaundice and anemia.</text>
</comment>
<comment type="similarity">
    <text evidence="8">Belongs to the ferrochelatase family.</text>
</comment>
<comment type="sequence caution" evidence="8">
    <conflict type="erroneous initiation">
        <sequence resource="EMBL-CDS" id="AAA37615"/>
    </conflict>
    <text>Extended N-terminus.</text>
</comment>